<keyword id="KW-0963">Cytoplasm</keyword>
<keyword id="KW-0648">Protein biosynthesis</keyword>
<keyword id="KW-1185">Reference proteome</keyword>
<feature type="chain" id="PRO_1000003280" description="Ribosome-recycling factor">
    <location>
        <begin position="1"/>
        <end position="184"/>
    </location>
</feature>
<feature type="region of interest" description="Disordered" evidence="2">
    <location>
        <begin position="133"/>
        <end position="153"/>
    </location>
</feature>
<sequence length="184" mass="20364">MSDIINETKSKMQKSIDNLSRELANISAGRANSNLLNGVNVDYYGAPTPVQQLASISVPEARLLVISPYDKSSVGNIEKAINAANLGVNPSSDGEVIRISVPALTEERRKELVKDVKKIGEDAKVAVRNVRRDSNDELKKQQKNSDITEDDLRTQTDDVQKLTDDSIKEVEKLLEEKEQDIMSV</sequence>
<reference key="1">
    <citation type="journal article" date="2005" name="Proc. Natl. Acad. Sci. U.S.A.">
        <title>Whole genome sequence of Staphylococcus saprophyticus reveals the pathogenesis of uncomplicated urinary tract infection.</title>
        <authorList>
            <person name="Kuroda M."/>
            <person name="Yamashita A."/>
            <person name="Hirakawa H."/>
            <person name="Kumano M."/>
            <person name="Morikawa K."/>
            <person name="Higashide M."/>
            <person name="Maruyama A."/>
            <person name="Inose Y."/>
            <person name="Matoba K."/>
            <person name="Toh H."/>
            <person name="Kuhara S."/>
            <person name="Hattori M."/>
            <person name="Ohta T."/>
        </authorList>
    </citation>
    <scope>NUCLEOTIDE SEQUENCE [LARGE SCALE GENOMIC DNA]</scope>
    <source>
        <strain>ATCC 15305 / DSM 20229 / NCIMB 8711 / NCTC 7292 / S-41</strain>
    </source>
</reference>
<dbReference type="EMBL" id="AP008934">
    <property type="protein sequence ID" value="BAE18654.1"/>
    <property type="molecule type" value="Genomic_DNA"/>
</dbReference>
<dbReference type="RefSeq" id="WP_002483464.1">
    <property type="nucleotide sequence ID" value="NZ_MTGA01000034.1"/>
</dbReference>
<dbReference type="SMR" id="Q49X44"/>
<dbReference type="GeneID" id="66867721"/>
<dbReference type="KEGG" id="ssp:SSP1509"/>
<dbReference type="eggNOG" id="COG0233">
    <property type="taxonomic scope" value="Bacteria"/>
</dbReference>
<dbReference type="HOGENOM" id="CLU_073981_2_0_9"/>
<dbReference type="OrthoDB" id="9804006at2"/>
<dbReference type="Proteomes" id="UP000006371">
    <property type="component" value="Chromosome"/>
</dbReference>
<dbReference type="GO" id="GO:0005737">
    <property type="term" value="C:cytoplasm"/>
    <property type="evidence" value="ECO:0007669"/>
    <property type="project" value="UniProtKB-SubCell"/>
</dbReference>
<dbReference type="GO" id="GO:0043023">
    <property type="term" value="F:ribosomal large subunit binding"/>
    <property type="evidence" value="ECO:0007669"/>
    <property type="project" value="TreeGrafter"/>
</dbReference>
<dbReference type="GO" id="GO:0006415">
    <property type="term" value="P:translational termination"/>
    <property type="evidence" value="ECO:0007669"/>
    <property type="project" value="UniProtKB-UniRule"/>
</dbReference>
<dbReference type="CDD" id="cd00520">
    <property type="entry name" value="RRF"/>
    <property type="match status" value="1"/>
</dbReference>
<dbReference type="FunFam" id="1.10.132.20:FF:000001">
    <property type="entry name" value="Ribosome-recycling factor"/>
    <property type="match status" value="1"/>
</dbReference>
<dbReference type="FunFam" id="3.30.1360.40:FF:000001">
    <property type="entry name" value="Ribosome-recycling factor"/>
    <property type="match status" value="1"/>
</dbReference>
<dbReference type="Gene3D" id="3.30.1360.40">
    <property type="match status" value="1"/>
</dbReference>
<dbReference type="Gene3D" id="1.10.132.20">
    <property type="entry name" value="Ribosome-recycling factor"/>
    <property type="match status" value="1"/>
</dbReference>
<dbReference type="HAMAP" id="MF_00040">
    <property type="entry name" value="RRF"/>
    <property type="match status" value="1"/>
</dbReference>
<dbReference type="InterPro" id="IPR002661">
    <property type="entry name" value="Ribosome_recyc_fac"/>
</dbReference>
<dbReference type="InterPro" id="IPR023584">
    <property type="entry name" value="Ribosome_recyc_fac_dom"/>
</dbReference>
<dbReference type="InterPro" id="IPR036191">
    <property type="entry name" value="RRF_sf"/>
</dbReference>
<dbReference type="NCBIfam" id="TIGR00496">
    <property type="entry name" value="frr"/>
    <property type="match status" value="1"/>
</dbReference>
<dbReference type="PANTHER" id="PTHR20982:SF3">
    <property type="entry name" value="MITOCHONDRIAL RIBOSOME RECYCLING FACTOR PSEUDO 1"/>
    <property type="match status" value="1"/>
</dbReference>
<dbReference type="PANTHER" id="PTHR20982">
    <property type="entry name" value="RIBOSOME RECYCLING FACTOR"/>
    <property type="match status" value="1"/>
</dbReference>
<dbReference type="Pfam" id="PF01765">
    <property type="entry name" value="RRF"/>
    <property type="match status" value="1"/>
</dbReference>
<dbReference type="SUPFAM" id="SSF55194">
    <property type="entry name" value="Ribosome recycling factor, RRF"/>
    <property type="match status" value="1"/>
</dbReference>
<accession>Q49X44</accession>
<protein>
    <recommendedName>
        <fullName evidence="1">Ribosome-recycling factor</fullName>
        <shortName evidence="1">RRF</shortName>
    </recommendedName>
    <alternativeName>
        <fullName evidence="1">Ribosome-releasing factor</fullName>
    </alternativeName>
</protein>
<name>RRF_STAS1</name>
<comment type="function">
    <text evidence="1">Responsible for the release of ribosomes from messenger RNA at the termination of protein biosynthesis. May increase the efficiency of translation by recycling ribosomes from one round of translation to another.</text>
</comment>
<comment type="subcellular location">
    <subcellularLocation>
        <location evidence="1">Cytoplasm</location>
    </subcellularLocation>
</comment>
<comment type="similarity">
    <text evidence="1">Belongs to the RRF family.</text>
</comment>
<proteinExistence type="inferred from homology"/>
<organism>
    <name type="scientific">Staphylococcus saprophyticus subsp. saprophyticus (strain ATCC 15305 / DSM 20229 / NCIMB 8711 / NCTC 7292 / S-41)</name>
    <dbReference type="NCBI Taxonomy" id="342451"/>
    <lineage>
        <taxon>Bacteria</taxon>
        <taxon>Bacillati</taxon>
        <taxon>Bacillota</taxon>
        <taxon>Bacilli</taxon>
        <taxon>Bacillales</taxon>
        <taxon>Staphylococcaceae</taxon>
        <taxon>Staphylococcus</taxon>
    </lineage>
</organism>
<gene>
    <name evidence="1" type="primary">frr</name>
    <name type="ordered locus">SSP1509</name>
</gene>
<evidence type="ECO:0000255" key="1">
    <source>
        <dbReference type="HAMAP-Rule" id="MF_00040"/>
    </source>
</evidence>
<evidence type="ECO:0000256" key="2">
    <source>
        <dbReference type="SAM" id="MobiDB-lite"/>
    </source>
</evidence>